<feature type="transit peptide" description="Mitochondrion" evidence="3">
    <location>
        <begin position="1"/>
        <end status="unknown"/>
    </location>
</feature>
<feature type="chain" id="PRO_0000020451" description="Pyruvate dehydrogenase E1 component subunit alpha, mitochondrial">
    <location>
        <begin status="unknown"/>
        <end position="409"/>
    </location>
</feature>
<feature type="binding site" evidence="2">
    <location>
        <position position="109"/>
    </location>
    <ligand>
        <name>pyruvate</name>
        <dbReference type="ChEBI" id="CHEBI:15361"/>
    </ligand>
</feature>
<feature type="binding site" evidence="2">
    <location>
        <position position="135"/>
    </location>
    <ligand>
        <name>pyruvate</name>
        <dbReference type="ChEBI" id="CHEBI:15361"/>
    </ligand>
</feature>
<feature type="binding site" evidence="2">
    <location>
        <position position="135"/>
    </location>
    <ligand>
        <name>thiamine diphosphate</name>
        <dbReference type="ChEBI" id="CHEBI:58937"/>
        <note>ligand shared with beta subunit</note>
    </ligand>
</feature>
<feature type="binding site" evidence="2">
    <location>
        <position position="136"/>
    </location>
    <ligand>
        <name>pyruvate</name>
        <dbReference type="ChEBI" id="CHEBI:15361"/>
    </ligand>
</feature>
<feature type="binding site" evidence="2">
    <location>
        <position position="136"/>
    </location>
    <ligand>
        <name>thiamine diphosphate</name>
        <dbReference type="ChEBI" id="CHEBI:58937"/>
        <note>ligand shared with beta subunit</note>
    </ligand>
</feature>
<feature type="binding site" evidence="2">
    <location>
        <position position="174"/>
    </location>
    <ligand>
        <name>pyruvate</name>
        <dbReference type="ChEBI" id="CHEBI:15361"/>
    </ligand>
</feature>
<feature type="binding site" evidence="2">
    <location>
        <position position="182"/>
    </location>
    <ligand>
        <name>pyruvate</name>
        <dbReference type="ChEBI" id="CHEBI:15361"/>
    </ligand>
</feature>
<feature type="binding site" evidence="2">
    <location>
        <position position="182"/>
    </location>
    <ligand>
        <name>thiamine diphosphate</name>
        <dbReference type="ChEBI" id="CHEBI:58937"/>
        <note>ligand shared with beta subunit</note>
    </ligand>
</feature>
<feature type="binding site" evidence="2">
    <location>
        <position position="184"/>
    </location>
    <ligand>
        <name>pyruvate</name>
        <dbReference type="ChEBI" id="CHEBI:15361"/>
    </ligand>
</feature>
<feature type="binding site" evidence="2">
    <location>
        <position position="184"/>
    </location>
    <ligand>
        <name>thiamine diphosphate</name>
        <dbReference type="ChEBI" id="CHEBI:58937"/>
        <note>ligand shared with beta subunit</note>
    </ligand>
</feature>
<feature type="binding site" evidence="2">
    <location>
        <position position="213"/>
    </location>
    <ligand>
        <name>Mg(2+)</name>
        <dbReference type="ChEBI" id="CHEBI:18420"/>
    </ligand>
</feature>
<feature type="binding site" evidence="2">
    <location>
        <position position="213"/>
    </location>
    <ligand>
        <name>pyruvate</name>
        <dbReference type="ChEBI" id="CHEBI:15361"/>
    </ligand>
</feature>
<feature type="binding site" evidence="2">
    <location>
        <position position="213"/>
    </location>
    <ligand>
        <name>thiamine diphosphate</name>
        <dbReference type="ChEBI" id="CHEBI:58937"/>
        <note>ligand shared with beta subunit</note>
    </ligand>
</feature>
<feature type="binding site" evidence="2">
    <location>
        <position position="214"/>
    </location>
    <ligand>
        <name>pyruvate</name>
        <dbReference type="ChEBI" id="CHEBI:15361"/>
    </ligand>
</feature>
<feature type="binding site" evidence="2">
    <location>
        <position position="214"/>
    </location>
    <ligand>
        <name>thiamine diphosphate</name>
        <dbReference type="ChEBI" id="CHEBI:58937"/>
        <note>ligand shared with beta subunit</note>
    </ligand>
</feature>
<feature type="binding site" evidence="2">
    <location>
        <position position="215"/>
    </location>
    <ligand>
        <name>pyruvate</name>
        <dbReference type="ChEBI" id="CHEBI:15361"/>
    </ligand>
</feature>
<feature type="binding site" evidence="2">
    <location>
        <position position="215"/>
    </location>
    <ligand>
        <name>thiamine diphosphate</name>
        <dbReference type="ChEBI" id="CHEBI:58937"/>
        <note>ligand shared with beta subunit</note>
    </ligand>
</feature>
<feature type="binding site" evidence="2">
    <location>
        <position position="242"/>
    </location>
    <ligand>
        <name>Mg(2+)</name>
        <dbReference type="ChEBI" id="CHEBI:18420"/>
    </ligand>
</feature>
<feature type="binding site" evidence="2">
    <location>
        <position position="242"/>
    </location>
    <ligand>
        <name>pyruvate</name>
        <dbReference type="ChEBI" id="CHEBI:15361"/>
    </ligand>
</feature>
<feature type="binding site" evidence="2">
    <location>
        <position position="242"/>
    </location>
    <ligand>
        <name>thiamine diphosphate</name>
        <dbReference type="ChEBI" id="CHEBI:58937"/>
        <note>ligand shared with beta subunit</note>
    </ligand>
</feature>
<feature type="binding site" evidence="2">
    <location>
        <position position="244"/>
    </location>
    <ligand>
        <name>Mg(2+)</name>
        <dbReference type="ChEBI" id="CHEBI:18420"/>
    </ligand>
</feature>
<feature type="binding site" evidence="2">
    <location>
        <position position="244"/>
    </location>
    <ligand>
        <name>pyruvate</name>
        <dbReference type="ChEBI" id="CHEBI:15361"/>
    </ligand>
</feature>
<feature type="binding site" evidence="2">
    <location>
        <position position="309"/>
    </location>
    <ligand>
        <name>thiamine diphosphate</name>
        <dbReference type="ChEBI" id="CHEBI:58937"/>
        <note>ligand shared with beta subunit</note>
    </ligand>
</feature>
<feature type="modified residue" description="Phosphothreonine" evidence="4">
    <location>
        <position position="6"/>
    </location>
</feature>
<feature type="modified residue" description="Phosphotyrosine" evidence="4">
    <location>
        <position position="306"/>
    </location>
</feature>
<feature type="modified residue" description="Phosphoserine" evidence="4">
    <location>
        <position position="310"/>
    </location>
</feature>
<feature type="modified residue" description="Phosphoserine" evidence="4">
    <location>
        <position position="312"/>
    </location>
</feature>
<reference key="1">
    <citation type="journal article" date="2002" name="Nature">
        <title>The genome sequence of Schizosaccharomyces pombe.</title>
        <authorList>
            <person name="Wood V."/>
            <person name="Gwilliam R."/>
            <person name="Rajandream M.A."/>
            <person name="Lyne M.H."/>
            <person name="Lyne R."/>
            <person name="Stewart A."/>
            <person name="Sgouros J.G."/>
            <person name="Peat N."/>
            <person name="Hayles J."/>
            <person name="Baker S.G."/>
            <person name="Basham D."/>
            <person name="Bowman S."/>
            <person name="Brooks K."/>
            <person name="Brown D."/>
            <person name="Brown S."/>
            <person name="Chillingworth T."/>
            <person name="Churcher C.M."/>
            <person name="Collins M."/>
            <person name="Connor R."/>
            <person name="Cronin A."/>
            <person name="Davis P."/>
            <person name="Feltwell T."/>
            <person name="Fraser A."/>
            <person name="Gentles S."/>
            <person name="Goble A."/>
            <person name="Hamlin N."/>
            <person name="Harris D.E."/>
            <person name="Hidalgo J."/>
            <person name="Hodgson G."/>
            <person name="Holroyd S."/>
            <person name="Hornsby T."/>
            <person name="Howarth S."/>
            <person name="Huckle E.J."/>
            <person name="Hunt S."/>
            <person name="Jagels K."/>
            <person name="James K.D."/>
            <person name="Jones L."/>
            <person name="Jones M."/>
            <person name="Leather S."/>
            <person name="McDonald S."/>
            <person name="McLean J."/>
            <person name="Mooney P."/>
            <person name="Moule S."/>
            <person name="Mungall K.L."/>
            <person name="Murphy L.D."/>
            <person name="Niblett D."/>
            <person name="Odell C."/>
            <person name="Oliver K."/>
            <person name="O'Neil S."/>
            <person name="Pearson D."/>
            <person name="Quail M.A."/>
            <person name="Rabbinowitsch E."/>
            <person name="Rutherford K.M."/>
            <person name="Rutter S."/>
            <person name="Saunders D."/>
            <person name="Seeger K."/>
            <person name="Sharp S."/>
            <person name="Skelton J."/>
            <person name="Simmonds M.N."/>
            <person name="Squares R."/>
            <person name="Squares S."/>
            <person name="Stevens K."/>
            <person name="Taylor K."/>
            <person name="Taylor R.G."/>
            <person name="Tivey A."/>
            <person name="Walsh S.V."/>
            <person name="Warren T."/>
            <person name="Whitehead S."/>
            <person name="Woodward J.R."/>
            <person name="Volckaert G."/>
            <person name="Aert R."/>
            <person name="Robben J."/>
            <person name="Grymonprez B."/>
            <person name="Weltjens I."/>
            <person name="Vanstreels E."/>
            <person name="Rieger M."/>
            <person name="Schaefer M."/>
            <person name="Mueller-Auer S."/>
            <person name="Gabel C."/>
            <person name="Fuchs M."/>
            <person name="Duesterhoeft A."/>
            <person name="Fritzc C."/>
            <person name="Holzer E."/>
            <person name="Moestl D."/>
            <person name="Hilbert H."/>
            <person name="Borzym K."/>
            <person name="Langer I."/>
            <person name="Beck A."/>
            <person name="Lehrach H."/>
            <person name="Reinhardt R."/>
            <person name="Pohl T.M."/>
            <person name="Eger P."/>
            <person name="Zimmermann W."/>
            <person name="Wedler H."/>
            <person name="Wambutt R."/>
            <person name="Purnelle B."/>
            <person name="Goffeau A."/>
            <person name="Cadieu E."/>
            <person name="Dreano S."/>
            <person name="Gloux S."/>
            <person name="Lelaure V."/>
            <person name="Mottier S."/>
            <person name="Galibert F."/>
            <person name="Aves S.J."/>
            <person name="Xiang Z."/>
            <person name="Hunt C."/>
            <person name="Moore K."/>
            <person name="Hurst S.M."/>
            <person name="Lucas M."/>
            <person name="Rochet M."/>
            <person name="Gaillardin C."/>
            <person name="Tallada V.A."/>
            <person name="Garzon A."/>
            <person name="Thode G."/>
            <person name="Daga R.R."/>
            <person name="Cruzado L."/>
            <person name="Jimenez J."/>
            <person name="Sanchez M."/>
            <person name="del Rey F."/>
            <person name="Benito J."/>
            <person name="Dominguez A."/>
            <person name="Revuelta J.L."/>
            <person name="Moreno S."/>
            <person name="Armstrong J."/>
            <person name="Forsburg S.L."/>
            <person name="Cerutti L."/>
            <person name="Lowe T."/>
            <person name="McCombie W.R."/>
            <person name="Paulsen I."/>
            <person name="Potashkin J."/>
            <person name="Shpakovski G.V."/>
            <person name="Ussery D."/>
            <person name="Barrell B.G."/>
            <person name="Nurse P."/>
        </authorList>
    </citation>
    <scope>NUCLEOTIDE SEQUENCE [LARGE SCALE GENOMIC DNA]</scope>
    <source>
        <strain>972 / ATCC 24843</strain>
    </source>
</reference>
<reference key="2">
    <citation type="journal article" date="2008" name="J. Proteome Res.">
        <title>Phosphoproteome analysis of fission yeast.</title>
        <authorList>
            <person name="Wilson-Grady J.T."/>
            <person name="Villen J."/>
            <person name="Gygi S.P."/>
        </authorList>
    </citation>
    <scope>PHOSPHORYLATION [LARGE SCALE ANALYSIS] AT THR-6; TYR-306; SER-310 AND SER-312</scope>
    <scope>IDENTIFICATION BY MASS SPECTROMETRY</scope>
</reference>
<sequence length="409" mass="45138">MFRTCTKIGTVPKVLVNQKGLIDGLRRVTTDATTSRANPAHVPEEHDKPFPVKLDDSVFEGYKIDVPSTEIEVTKGELLGLYEKMVTIRRLELACDALYKAKKIRGFCHLSIGQEAVAAGIEGAITLDDSIITSYRCHGFAYTRGLSIRSIIGELMGRQCGASKGKGGSMHIFAKNFYGGNGIVGAQIPLGAGIGFAQKYLEKPTTTFALYGDGASNQGQAFEAFNMAKLWGLPVIFACENNKYGMGTSAERSSAMTEFYKRGQYIPGLLVNGMDVLAVLQASKFAKKYTVENSQPLLMEFVTYRYGGHSMSDPGTTYRSREEVQKVRAARDPIEGLKKHIMEWGVANANELKNIEKRIRGMVDEEVRIAEESPFPDPIEESLFSDVYVAGTEPAYARGRNSLEYHQYK</sequence>
<dbReference type="EC" id="1.2.4.1"/>
<dbReference type="EMBL" id="CU329670">
    <property type="protein sequence ID" value="CAA97360.1"/>
    <property type="molecule type" value="Genomic_DNA"/>
</dbReference>
<dbReference type="PIR" id="T38417">
    <property type="entry name" value="T38417"/>
</dbReference>
<dbReference type="RefSeq" id="NP_594892.1">
    <property type="nucleotide sequence ID" value="NM_001020321.2"/>
</dbReference>
<dbReference type="SMR" id="Q10489"/>
<dbReference type="BioGRID" id="278076">
    <property type="interactions" value="6"/>
</dbReference>
<dbReference type="FunCoup" id="Q10489">
    <property type="interactions" value="155"/>
</dbReference>
<dbReference type="STRING" id="284812.Q10489"/>
<dbReference type="iPTMnet" id="Q10489"/>
<dbReference type="PaxDb" id="4896-SPAC26F1.03.1"/>
<dbReference type="EnsemblFungi" id="SPAC26F1.03.1">
    <property type="protein sequence ID" value="SPAC26F1.03.1:pep"/>
    <property type="gene ID" value="SPAC26F1.03"/>
</dbReference>
<dbReference type="GeneID" id="2541579"/>
<dbReference type="KEGG" id="spo:2541579"/>
<dbReference type="PomBase" id="SPAC26F1.03">
    <property type="gene designation" value="pda1"/>
</dbReference>
<dbReference type="VEuPathDB" id="FungiDB:SPAC26F1.03"/>
<dbReference type="eggNOG" id="KOG0225">
    <property type="taxonomic scope" value="Eukaryota"/>
</dbReference>
<dbReference type="HOGENOM" id="CLU_029393_5_2_1"/>
<dbReference type="InParanoid" id="Q10489"/>
<dbReference type="OMA" id="LGYEMPC"/>
<dbReference type="PhylomeDB" id="Q10489"/>
<dbReference type="Reactome" id="R-SPO-204174">
    <property type="pathway name" value="Regulation of pyruvate dehydrogenase (PDH) complex"/>
</dbReference>
<dbReference type="Reactome" id="R-SPO-5362517">
    <property type="pathway name" value="Signaling by Retinoic Acid"/>
</dbReference>
<dbReference type="Reactome" id="R-SPO-9861559">
    <property type="pathway name" value="PDH complex synthesizes acetyl-CoA from PYR"/>
</dbReference>
<dbReference type="PRO" id="PR:Q10489"/>
<dbReference type="Proteomes" id="UP000002485">
    <property type="component" value="Chromosome I"/>
</dbReference>
<dbReference type="GO" id="GO:0005759">
    <property type="term" value="C:mitochondrial matrix"/>
    <property type="evidence" value="ECO:0007669"/>
    <property type="project" value="UniProtKB-SubCell"/>
</dbReference>
<dbReference type="GO" id="GO:0005739">
    <property type="term" value="C:mitochondrion"/>
    <property type="evidence" value="ECO:0007005"/>
    <property type="project" value="PomBase"/>
</dbReference>
<dbReference type="GO" id="GO:0045254">
    <property type="term" value="C:pyruvate dehydrogenase complex"/>
    <property type="evidence" value="ECO:0000250"/>
    <property type="project" value="PomBase"/>
</dbReference>
<dbReference type="GO" id="GO:0046872">
    <property type="term" value="F:metal ion binding"/>
    <property type="evidence" value="ECO:0007669"/>
    <property type="project" value="UniProtKB-KW"/>
</dbReference>
<dbReference type="GO" id="GO:0004739">
    <property type="term" value="F:pyruvate dehydrogenase (acetyl-transferring) activity"/>
    <property type="evidence" value="ECO:0000318"/>
    <property type="project" value="GO_Central"/>
</dbReference>
<dbReference type="GO" id="GO:0009060">
    <property type="term" value="P:aerobic respiration"/>
    <property type="evidence" value="ECO:0000305"/>
    <property type="project" value="PomBase"/>
</dbReference>
<dbReference type="GO" id="GO:0006086">
    <property type="term" value="P:pyruvate decarboxylation to acetyl-CoA"/>
    <property type="evidence" value="ECO:0000318"/>
    <property type="project" value="GO_Central"/>
</dbReference>
<dbReference type="CDD" id="cd02000">
    <property type="entry name" value="TPP_E1_PDC_ADC_BCADC"/>
    <property type="match status" value="1"/>
</dbReference>
<dbReference type="FunFam" id="3.40.50.970:FF:000013">
    <property type="entry name" value="Pyruvate dehydrogenase E1 component subunit alpha"/>
    <property type="match status" value="1"/>
</dbReference>
<dbReference type="Gene3D" id="3.40.50.970">
    <property type="match status" value="1"/>
</dbReference>
<dbReference type="InterPro" id="IPR001017">
    <property type="entry name" value="DH_E1"/>
</dbReference>
<dbReference type="InterPro" id="IPR050642">
    <property type="entry name" value="PDH_E1_Alpha_Subunit"/>
</dbReference>
<dbReference type="InterPro" id="IPR017597">
    <property type="entry name" value="Pyrv_DH_E1_asu_subgrp-y"/>
</dbReference>
<dbReference type="InterPro" id="IPR029061">
    <property type="entry name" value="THDP-binding"/>
</dbReference>
<dbReference type="NCBIfam" id="TIGR03182">
    <property type="entry name" value="PDH_E1_alph_y"/>
    <property type="match status" value="1"/>
</dbReference>
<dbReference type="PANTHER" id="PTHR11516:SF60">
    <property type="entry name" value="PYRUVATE DEHYDROGENASE E1 COMPONENT SUBUNIT ALPHA"/>
    <property type="match status" value="1"/>
</dbReference>
<dbReference type="PANTHER" id="PTHR11516">
    <property type="entry name" value="PYRUVATE DEHYDROGENASE E1 COMPONENT, ALPHA SUBUNIT BACTERIAL AND ORGANELLAR"/>
    <property type="match status" value="1"/>
</dbReference>
<dbReference type="Pfam" id="PF00676">
    <property type="entry name" value="E1_dh"/>
    <property type="match status" value="1"/>
</dbReference>
<dbReference type="SUPFAM" id="SSF52518">
    <property type="entry name" value="Thiamin diphosphate-binding fold (THDP-binding)"/>
    <property type="match status" value="1"/>
</dbReference>
<protein>
    <recommendedName>
        <fullName>Pyruvate dehydrogenase E1 component subunit alpha, mitochondrial</fullName>
        <shortName>PDHE1-A</shortName>
        <ecNumber>1.2.4.1</ecNumber>
    </recommendedName>
</protein>
<gene>
    <name type="primary">pda1</name>
    <name type="ORF">SPAC26F1.03</name>
</gene>
<accession>Q10489</accession>
<evidence type="ECO:0000250" key="1"/>
<evidence type="ECO:0000250" key="2">
    <source>
        <dbReference type="UniProtKB" id="P08559"/>
    </source>
</evidence>
<evidence type="ECO:0000255" key="3"/>
<evidence type="ECO:0000269" key="4">
    <source>
    </source>
</evidence>
<name>ODPA_SCHPO</name>
<keyword id="KW-0460">Magnesium</keyword>
<keyword id="KW-0479">Metal-binding</keyword>
<keyword id="KW-0496">Mitochondrion</keyword>
<keyword id="KW-0560">Oxidoreductase</keyword>
<keyword id="KW-0597">Phosphoprotein</keyword>
<keyword id="KW-0670">Pyruvate</keyword>
<keyword id="KW-1185">Reference proteome</keyword>
<keyword id="KW-0786">Thiamine pyrophosphate</keyword>
<keyword id="KW-0809">Transit peptide</keyword>
<comment type="function">
    <text>The pyruvate dehydrogenase complex catalyzes the overall conversion of pyruvate to acetyl-CoA and CO(2). It contains multiple copies of three enzymatic components: pyruvate dehydrogenase (E1), dihydrolipoamide acetyltransferase (E2) and lipoamide dehydrogenase (E3).</text>
</comment>
<comment type="catalytic activity">
    <reaction>
        <text>N(6)-[(R)-lipoyl]-L-lysyl-[protein] + pyruvate + H(+) = N(6)-[(R)-S(8)-acetyldihydrolipoyl]-L-lysyl-[protein] + CO2</text>
        <dbReference type="Rhea" id="RHEA:19189"/>
        <dbReference type="Rhea" id="RHEA-COMP:10474"/>
        <dbReference type="Rhea" id="RHEA-COMP:10478"/>
        <dbReference type="ChEBI" id="CHEBI:15361"/>
        <dbReference type="ChEBI" id="CHEBI:15378"/>
        <dbReference type="ChEBI" id="CHEBI:16526"/>
        <dbReference type="ChEBI" id="CHEBI:83099"/>
        <dbReference type="ChEBI" id="CHEBI:83111"/>
        <dbReference type="EC" id="1.2.4.1"/>
    </reaction>
</comment>
<comment type="cofactor">
    <cofactor evidence="2">
        <name>thiamine diphosphate</name>
        <dbReference type="ChEBI" id="CHEBI:58937"/>
    </cofactor>
    <cofactor evidence="2">
        <name>Mg(2+)</name>
        <dbReference type="ChEBI" id="CHEBI:18420"/>
    </cofactor>
</comment>
<comment type="activity regulation">
    <text evidence="1">E1 activity is regulated by phosphorylation (inactivation) and dephosphorylation (activation) of the alpha subunit.</text>
</comment>
<comment type="subunit">
    <text evidence="1">Tetramer of 2 alpha and 2 beta subunits.</text>
</comment>
<comment type="subcellular location">
    <subcellularLocation>
        <location evidence="1">Mitochondrion matrix</location>
    </subcellularLocation>
</comment>
<proteinExistence type="evidence at protein level"/>
<organism>
    <name type="scientific">Schizosaccharomyces pombe (strain 972 / ATCC 24843)</name>
    <name type="common">Fission yeast</name>
    <dbReference type="NCBI Taxonomy" id="284812"/>
    <lineage>
        <taxon>Eukaryota</taxon>
        <taxon>Fungi</taxon>
        <taxon>Dikarya</taxon>
        <taxon>Ascomycota</taxon>
        <taxon>Taphrinomycotina</taxon>
        <taxon>Schizosaccharomycetes</taxon>
        <taxon>Schizosaccharomycetales</taxon>
        <taxon>Schizosaccharomycetaceae</taxon>
        <taxon>Schizosaccharomyces</taxon>
    </lineage>
</organism>